<gene>
    <name type="primary">B2M</name>
</gene>
<dbReference type="EMBL" id="AF084627">
    <property type="protein sequence ID" value="AAF21791.1"/>
    <property type="molecule type" value="Genomic_DNA"/>
</dbReference>
<dbReference type="EMBL" id="AF084625">
    <property type="protein sequence ID" value="AAF21791.1"/>
    <property type="status" value="JOINED"/>
    <property type="molecule type" value="Genomic_DNA"/>
</dbReference>
<dbReference type="EMBL" id="AF084626">
    <property type="protein sequence ID" value="AAF21791.1"/>
    <property type="status" value="JOINED"/>
    <property type="molecule type" value="Genomic_DNA"/>
</dbReference>
<dbReference type="SMR" id="P63068"/>
<dbReference type="GO" id="GO:0005576">
    <property type="term" value="C:extracellular region"/>
    <property type="evidence" value="ECO:0007669"/>
    <property type="project" value="UniProtKB-SubCell"/>
</dbReference>
<dbReference type="GO" id="GO:0042612">
    <property type="term" value="C:MHC class I protein complex"/>
    <property type="evidence" value="ECO:0007669"/>
    <property type="project" value="UniProtKB-KW"/>
</dbReference>
<dbReference type="GO" id="GO:0002474">
    <property type="term" value="P:antigen processing and presentation of peptide antigen via MHC class I"/>
    <property type="evidence" value="ECO:0007669"/>
    <property type="project" value="UniProtKB-KW"/>
</dbReference>
<dbReference type="GO" id="GO:0006955">
    <property type="term" value="P:immune response"/>
    <property type="evidence" value="ECO:0007669"/>
    <property type="project" value="InterPro"/>
</dbReference>
<dbReference type="CDD" id="cd05770">
    <property type="entry name" value="IgC1_beta2m"/>
    <property type="match status" value="1"/>
</dbReference>
<dbReference type="FunFam" id="2.60.40.10:FF:001005">
    <property type="entry name" value="Beta-2-microglobulin"/>
    <property type="match status" value="1"/>
</dbReference>
<dbReference type="Gene3D" id="2.60.40.10">
    <property type="entry name" value="Immunoglobulins"/>
    <property type="match status" value="1"/>
</dbReference>
<dbReference type="InterPro" id="IPR015707">
    <property type="entry name" value="B2Microglobulin"/>
</dbReference>
<dbReference type="InterPro" id="IPR007110">
    <property type="entry name" value="Ig-like_dom"/>
</dbReference>
<dbReference type="InterPro" id="IPR036179">
    <property type="entry name" value="Ig-like_dom_sf"/>
</dbReference>
<dbReference type="InterPro" id="IPR013783">
    <property type="entry name" value="Ig-like_fold"/>
</dbReference>
<dbReference type="InterPro" id="IPR003006">
    <property type="entry name" value="Ig/MHC_CS"/>
</dbReference>
<dbReference type="InterPro" id="IPR003597">
    <property type="entry name" value="Ig_C1-set"/>
</dbReference>
<dbReference type="InterPro" id="IPR050160">
    <property type="entry name" value="MHC/Immunoglobulin"/>
</dbReference>
<dbReference type="PANTHER" id="PTHR19944:SF62">
    <property type="entry name" value="BETA-2-MICROGLOBULIN"/>
    <property type="match status" value="1"/>
</dbReference>
<dbReference type="PANTHER" id="PTHR19944">
    <property type="entry name" value="MHC CLASS II-RELATED"/>
    <property type="match status" value="1"/>
</dbReference>
<dbReference type="Pfam" id="PF07654">
    <property type="entry name" value="C1-set"/>
    <property type="match status" value="1"/>
</dbReference>
<dbReference type="SMART" id="SM00407">
    <property type="entry name" value="IGc1"/>
    <property type="match status" value="1"/>
</dbReference>
<dbReference type="SUPFAM" id="SSF48726">
    <property type="entry name" value="Immunoglobulin"/>
    <property type="match status" value="1"/>
</dbReference>
<dbReference type="PROSITE" id="PS50835">
    <property type="entry name" value="IG_LIKE"/>
    <property type="match status" value="1"/>
</dbReference>
<dbReference type="PROSITE" id="PS00290">
    <property type="entry name" value="IG_MHC"/>
    <property type="match status" value="1"/>
</dbReference>
<sequence>MARFVVVPLLVLLSLFGLEAIQHPPKIQVYSRYPADNGKPNFLNCYVSGFHPSDIEVDLLKNGKKIEKVEHSDLSFSKDWSFYLLYYTEFTPNEKDEYACRVSHVTFSTPKTVKWDRNM</sequence>
<accession>P63068</accession>
<accession>O77516</accession>
<evidence type="ECO:0000250" key="1"/>
<evidence type="ECO:0000255" key="2">
    <source>
        <dbReference type="PROSITE-ProRule" id="PRU00114"/>
    </source>
</evidence>
<evidence type="ECO:0000305" key="3"/>
<proteinExistence type="inferred from homology"/>
<protein>
    <recommendedName>
        <fullName>Beta-2-microglobulin</fullName>
    </recommendedName>
</protein>
<keyword id="KW-1015">Disulfide bond</keyword>
<keyword id="KW-0391">Immunity</keyword>
<keyword id="KW-0393">Immunoglobulin domain</keyword>
<keyword id="KW-0490">MHC I</keyword>
<keyword id="KW-0964">Secreted</keyword>
<keyword id="KW-0732">Signal</keyword>
<reference key="1">
    <citation type="journal article" date="1999" name="Am. J. Primatol.">
        <title>Phylogenetic relationships of the Callitrichinae (Platyrrhini, primates) based on beta2-microglobulin DNA sequences.</title>
        <authorList>
            <person name="Canavez F.C."/>
            <person name="Moreira M.A.M."/>
            <person name="Simon F."/>
            <person name="Parham P."/>
            <person name="Seuanez H.N."/>
        </authorList>
    </citation>
    <scope>NUCLEOTIDE SEQUENCE [GENOMIC DNA]</scope>
</reference>
<comment type="function">
    <text evidence="1">Component of the class I major histocompatibility complex (MHC). Involved in the presentation of peptide antigens to the immune system (By similarity).</text>
</comment>
<comment type="subunit">
    <text evidence="1">Heterodimer of an alpha chain and a beta chain. Beta-2-microglobulin is the beta-chain of major histocompatibility complex class I molecules (By similarity).</text>
</comment>
<comment type="subcellular location">
    <subcellularLocation>
        <location evidence="1">Secreted</location>
    </subcellularLocation>
</comment>
<comment type="similarity">
    <text evidence="3">Belongs to the beta-2-microglobulin family.</text>
</comment>
<feature type="signal peptide" evidence="1">
    <location>
        <begin position="1"/>
        <end position="20"/>
    </location>
</feature>
<feature type="chain" id="PRO_0000018791" description="Beta-2-microglobulin">
    <location>
        <begin position="21"/>
        <end position="119"/>
    </location>
</feature>
<feature type="domain" description="Ig-like C1-type">
    <location>
        <begin position="25"/>
        <end position="114"/>
    </location>
</feature>
<feature type="disulfide bond" evidence="2">
    <location>
        <begin position="45"/>
        <end position="100"/>
    </location>
</feature>
<organism>
    <name type="scientific">Saguinus bicolor bicolor</name>
    <name type="common">Pied bare-faced tamarin</name>
    <dbReference type="NCBI Taxonomy" id="37589"/>
    <lineage>
        <taxon>Eukaryota</taxon>
        <taxon>Metazoa</taxon>
        <taxon>Chordata</taxon>
        <taxon>Craniata</taxon>
        <taxon>Vertebrata</taxon>
        <taxon>Euteleostomi</taxon>
        <taxon>Mammalia</taxon>
        <taxon>Eutheria</taxon>
        <taxon>Euarchontoglires</taxon>
        <taxon>Primates</taxon>
        <taxon>Haplorrhini</taxon>
        <taxon>Platyrrhini</taxon>
        <taxon>Cebidae</taxon>
        <taxon>Callitrichinae</taxon>
        <taxon>Saguinus</taxon>
    </lineage>
</organism>
<name>B2MG_SAGBB</name>